<accession>P0CS94</accession>
<accession>Q8J0Y9</accession>
<accession>Q8J109</accession>
<comment type="function">
    <text evidence="1">GTPase that associates with pre-60S ribosomal subunits in the nucleolus and is required for their nuclear export and maturation.</text>
</comment>
<comment type="subcellular location">
    <subcellularLocation>
        <location evidence="1">Nucleus</location>
        <location evidence="1">Nucleolus</location>
    </subcellularLocation>
</comment>
<comment type="miscellaneous">
    <text>The C.neoformans mating-type locus is unique, spans &gt;100 kb, and contains more than 20 genes. MAT-encoded products include homologs of regulators of sexual development in other fungi, pheromone and pheromone receptors, divergent components of a MAP kinase cascade, and other proteins with no obvious function in mating.</text>
</comment>
<comment type="similarity">
    <text evidence="3">Belongs to the TRAFAC class YlqF/YawG GTPase family. NOG2 subfamily.</text>
</comment>
<reference key="1">
    <citation type="journal article" date="2002" name="Eukaryot. Cell">
        <title>Mating-type locus of Cryptococcus neoformans: a step in the evolution of sex chromosomes.</title>
        <authorList>
            <person name="Lengeler K.B."/>
            <person name="Fox D.S."/>
            <person name="Fraser J.A."/>
            <person name="Allen A."/>
            <person name="Forrester K."/>
            <person name="Dietrich F.S."/>
            <person name="Heitman J."/>
        </authorList>
    </citation>
    <scope>NUCLEOTIDE SEQUENCE [GENOMIC DNA]</scope>
    <source>
        <strain>125.91</strain>
    </source>
</reference>
<reference key="2">
    <citation type="submission" date="2004-12" db="EMBL/GenBank/DDBJ databases">
        <authorList>
            <person name="Dietrich F.S."/>
        </authorList>
    </citation>
    <scope>SEQUENCE REVISION</scope>
</reference>
<proteinExistence type="inferred from homology"/>
<keyword id="KW-0342">GTP-binding</keyword>
<keyword id="KW-0547">Nucleotide-binding</keyword>
<keyword id="KW-0539">Nucleus</keyword>
<keyword id="KW-0690">Ribosome biogenesis</keyword>
<organism>
    <name type="scientific">Cryptococcus neoformans var. grubii</name>
    <name type="common">Filobasidiella neoformans var. grubii</name>
    <dbReference type="NCBI Taxonomy" id="178876"/>
    <lineage>
        <taxon>Eukaryota</taxon>
        <taxon>Fungi</taxon>
        <taxon>Dikarya</taxon>
        <taxon>Basidiomycota</taxon>
        <taxon>Agaricomycotina</taxon>
        <taxon>Tremellomycetes</taxon>
        <taxon>Tremellales</taxon>
        <taxon>Cryptococcaceae</taxon>
        <taxon>Cryptococcus</taxon>
        <taxon>Cryptococcus neoformans species complex</taxon>
    </lineage>
</organism>
<feature type="chain" id="PRO_0000215811" description="Nucleolar GTP-binding protein 2">
    <location>
        <begin position="1"/>
        <end position="693"/>
    </location>
</feature>
<feature type="domain" description="CP-type G" evidence="3">
    <location>
        <begin position="198"/>
        <end position="359"/>
    </location>
</feature>
<feature type="region of interest" description="Disordered" evidence="4">
    <location>
        <begin position="1"/>
        <end position="27"/>
    </location>
</feature>
<feature type="region of interest" description="Disordered" evidence="4">
    <location>
        <begin position="144"/>
        <end position="164"/>
    </location>
</feature>
<feature type="region of interest" description="Disordered" evidence="4">
    <location>
        <begin position="461"/>
        <end position="500"/>
    </location>
</feature>
<feature type="region of interest" description="Disordered" evidence="4">
    <location>
        <begin position="541"/>
        <end position="693"/>
    </location>
</feature>
<feature type="compositionally biased region" description="Basic and acidic residues" evidence="4">
    <location>
        <begin position="480"/>
        <end position="500"/>
    </location>
</feature>
<feature type="compositionally biased region" description="Acidic residues" evidence="4">
    <location>
        <begin position="541"/>
        <end position="588"/>
    </location>
</feature>
<feature type="compositionally biased region" description="Acidic residues" evidence="4">
    <location>
        <begin position="597"/>
        <end position="618"/>
    </location>
</feature>
<feature type="compositionally biased region" description="Polar residues" evidence="4">
    <location>
        <begin position="647"/>
        <end position="660"/>
    </location>
</feature>
<feature type="compositionally biased region" description="Basic residues" evidence="4">
    <location>
        <begin position="661"/>
        <end position="677"/>
    </location>
</feature>
<feature type="binding site" evidence="2">
    <location>
        <begin position="308"/>
        <end position="315"/>
    </location>
    <ligand>
        <name>GTP</name>
        <dbReference type="ChEBI" id="CHEBI:37565"/>
    </ligand>
</feature>
<feature type="binding site" evidence="2">
    <location>
        <begin position="352"/>
        <end position="356"/>
    </location>
    <ligand>
        <name>GTP</name>
        <dbReference type="ChEBI" id="CHEBI:37565"/>
    </ligand>
</feature>
<dbReference type="EMBL" id="AF542528">
    <property type="protein sequence ID" value="AAN75146.2"/>
    <property type="molecule type" value="Genomic_DNA"/>
</dbReference>
<dbReference type="SMR" id="P0CS94"/>
<dbReference type="GO" id="GO:0005730">
    <property type="term" value="C:nucleolus"/>
    <property type="evidence" value="ECO:0007669"/>
    <property type="project" value="UniProtKB-SubCell"/>
</dbReference>
<dbReference type="GO" id="GO:0005525">
    <property type="term" value="F:GTP binding"/>
    <property type="evidence" value="ECO:0007669"/>
    <property type="project" value="UniProtKB-KW"/>
</dbReference>
<dbReference type="GO" id="GO:0042254">
    <property type="term" value="P:ribosome biogenesis"/>
    <property type="evidence" value="ECO:0007669"/>
    <property type="project" value="UniProtKB-KW"/>
</dbReference>
<dbReference type="CDD" id="cd01858">
    <property type="entry name" value="NGP_1"/>
    <property type="match status" value="1"/>
</dbReference>
<dbReference type="FunFam" id="3.40.50.300:FF:000559">
    <property type="entry name" value="Nuclear/nucleolar GTPase 2"/>
    <property type="match status" value="1"/>
</dbReference>
<dbReference type="FunFam" id="1.10.1580.10:FF:000001">
    <property type="entry name" value="Nucleolar GTP-binding protein 2"/>
    <property type="match status" value="1"/>
</dbReference>
<dbReference type="Gene3D" id="1.10.1580.10">
    <property type="match status" value="1"/>
</dbReference>
<dbReference type="Gene3D" id="3.40.50.300">
    <property type="entry name" value="P-loop containing nucleotide triphosphate hydrolases"/>
    <property type="match status" value="1"/>
</dbReference>
<dbReference type="InterPro" id="IPR030378">
    <property type="entry name" value="G_CP_dom"/>
</dbReference>
<dbReference type="InterPro" id="IPR024929">
    <property type="entry name" value="GNL2_CP_dom"/>
</dbReference>
<dbReference type="InterPro" id="IPR006073">
    <property type="entry name" value="GTP-bd"/>
</dbReference>
<dbReference type="InterPro" id="IPR023179">
    <property type="entry name" value="GTP-bd_ortho_bundle_sf"/>
</dbReference>
<dbReference type="InterPro" id="IPR012971">
    <property type="entry name" value="NOG2_N_dom"/>
</dbReference>
<dbReference type="InterPro" id="IPR027417">
    <property type="entry name" value="P-loop_NTPase"/>
</dbReference>
<dbReference type="InterPro" id="IPR050755">
    <property type="entry name" value="TRAFAC_YlqF/YawG_RiboMat"/>
</dbReference>
<dbReference type="PANTHER" id="PTHR11089">
    <property type="entry name" value="GTP-BINDING PROTEIN-RELATED"/>
    <property type="match status" value="1"/>
</dbReference>
<dbReference type="PANTHER" id="PTHR11089:SF9">
    <property type="entry name" value="NUCLEOLAR GTP-BINDING PROTEIN 2"/>
    <property type="match status" value="1"/>
</dbReference>
<dbReference type="Pfam" id="PF01926">
    <property type="entry name" value="MMR_HSR1"/>
    <property type="match status" value="1"/>
</dbReference>
<dbReference type="Pfam" id="PF08153">
    <property type="entry name" value="NGP1NT"/>
    <property type="match status" value="1"/>
</dbReference>
<dbReference type="PRINTS" id="PR00326">
    <property type="entry name" value="GTP1OBG"/>
</dbReference>
<dbReference type="SUPFAM" id="SSF52540">
    <property type="entry name" value="P-loop containing nucleoside triphosphate hydrolases"/>
    <property type="match status" value="1"/>
</dbReference>
<dbReference type="PROSITE" id="PS51721">
    <property type="entry name" value="G_CP"/>
    <property type="match status" value="1"/>
</dbReference>
<evidence type="ECO:0000250" key="1"/>
<evidence type="ECO:0000255" key="2"/>
<evidence type="ECO:0000255" key="3">
    <source>
        <dbReference type="PROSITE-ProRule" id="PRU01058"/>
    </source>
</evidence>
<evidence type="ECO:0000256" key="4">
    <source>
        <dbReference type="SAM" id="MobiDB-lite"/>
    </source>
</evidence>
<sequence>MGKGKNHDRKANPGFGKVKSKTGTSTGEFTLKRVKGENFYRDAKSASRVKMLNGGKAVRDRDGKIVEAAAFQKGEKEAEPGRVKPDRRWFGNTRVISQSALDHFRTALKEQKADPYSVLLKRNKLPMGFGSRKNRKQRPHIVETEPFGNTFGPKAQRKRPRLDIGKGNGTADLADIYHPTTSTAREPIYAKGTSRRIWGELYKVLDSSDVVIHVLDARDPLGTRCKPVVEYLRKEKAHKHLVYVLNKVDLVPTWVTARWVKHLSLSAPTIAFHASINNSFGKGSLIQLLRQFSVLHSDKKQISVGFIGYPNTGKSSIINTLKKKKVCTVAPIPGETKVWQYITLMRRIYLIDCPGIVPVSAKDSDTDTVLKGVVRVENLATPAEHIPALLERVRPEYLERTYGLEHVEGGWHGEEGATFVLTAIAKKSGKLLKGGEPDQEAAAKMVLNDWIRGKVPFFVAPPTKPESGADAHVSSATTEKVQEQEQKELAEEKETKEMLEEQERSLGKVLGIKRVKGVEQPISKIVTMTKFLGDDARRYVEEEEVDVDDVDKEMAEEDEDEDEDDDDDVEESGEDQEEEELAWDDVFPEEAAGVDAADGEEVEEDDEEEEGDEDDEDVPSAKQLGKRKAIDSDEEEQTAIKAKRMTTNKQKASNFYTHANVKNRNRDRKVPKNPGKRSRGDDEPTGKKAKKRR</sequence>
<name>NOG2_CRYNV</name>
<gene>
    <name type="primary">NOG2</name>
</gene>
<protein>
    <recommendedName>
        <fullName>Nucleolar GTP-binding protein 2</fullName>
    </recommendedName>
</protein>